<gene>
    <name evidence="1" type="primary">xylA</name>
    <name type="ordered locus">Teth514_0153</name>
</gene>
<sequence>MEYFKNVPQIKYEGPKSNNPYAFKFYNPDEIIDGKPLKEHLRFSVAYWHTFTANGTDPFGAPTMQRPWDHFTDPMDIAKARVEAAFELFEKLDVPFFCFHDRDIAPEGETLRETNKNLDTIVAMIKDYLKTSKTKVLWGTANLFSNPRFVHGAATSCNADVFAYAAAQVKKALEITKELGGQNYVFWGGREGYETLLNTDMELELDNLARFLHMAVEYAQEIGFEGQFLIEPKPKEPTKHQYDFDAASVHAFLKKYDLDKYFKLNIEANHATLAGHDFQHELRYARINNILGSIDANMGDMLLGWDTDQYPTDIRMTTLAMYEVIKMGGFNKGGLNFDAKVRRASFEPEDLFLGHIAGMDAFAKGFKVAYKLVKDGVFDRFIEERYKSYREGIGAEIVSGKANFKTLEEYALNNPKIENKSGKQELLESILNQYLFSE</sequence>
<protein>
    <recommendedName>
        <fullName evidence="1">Xylose isomerase</fullName>
        <ecNumber evidence="1">5.3.1.5</ecNumber>
    </recommendedName>
</protein>
<reference key="1">
    <citation type="submission" date="2008-01" db="EMBL/GenBank/DDBJ databases">
        <title>Complete sequence of Thermoanaerobacter sp. X514.</title>
        <authorList>
            <consortium name="US DOE Joint Genome Institute"/>
            <person name="Copeland A."/>
            <person name="Lucas S."/>
            <person name="Lapidus A."/>
            <person name="Barry K."/>
            <person name="Glavina del Rio T."/>
            <person name="Dalin E."/>
            <person name="Tice H."/>
            <person name="Pitluck S."/>
            <person name="Bruce D."/>
            <person name="Goodwin L."/>
            <person name="Saunders E."/>
            <person name="Brettin T."/>
            <person name="Detter J.C."/>
            <person name="Han C."/>
            <person name="Schmutz J."/>
            <person name="Larimer F."/>
            <person name="Land M."/>
            <person name="Hauser L."/>
            <person name="Kyrpides N."/>
            <person name="Kim E."/>
            <person name="Hemme C."/>
            <person name="Fields M.W."/>
            <person name="He Z."/>
            <person name="Zhou J."/>
            <person name="Richardson P."/>
        </authorList>
    </citation>
    <scope>NUCLEOTIDE SEQUENCE [LARGE SCALE GENOMIC DNA]</scope>
    <source>
        <strain>X514</strain>
    </source>
</reference>
<feature type="chain" id="PRO_1000200312" description="Xylose isomerase">
    <location>
        <begin position="1"/>
        <end position="438"/>
    </location>
</feature>
<feature type="active site" evidence="1">
    <location>
        <position position="100"/>
    </location>
</feature>
<feature type="active site" evidence="1">
    <location>
        <position position="103"/>
    </location>
</feature>
<feature type="binding site" evidence="1">
    <location>
        <position position="231"/>
    </location>
    <ligand>
        <name>Mg(2+)</name>
        <dbReference type="ChEBI" id="CHEBI:18420"/>
        <label>1</label>
    </ligand>
</feature>
<feature type="binding site" evidence="1">
    <location>
        <position position="267"/>
    </location>
    <ligand>
        <name>Mg(2+)</name>
        <dbReference type="ChEBI" id="CHEBI:18420"/>
        <label>1</label>
    </ligand>
</feature>
<feature type="binding site" evidence="1">
    <location>
        <position position="267"/>
    </location>
    <ligand>
        <name>Mg(2+)</name>
        <dbReference type="ChEBI" id="CHEBI:18420"/>
        <label>2</label>
    </ligand>
</feature>
<feature type="binding site" evidence="1">
    <location>
        <position position="270"/>
    </location>
    <ligand>
        <name>Mg(2+)</name>
        <dbReference type="ChEBI" id="CHEBI:18420"/>
        <label>2</label>
    </ligand>
</feature>
<feature type="binding site" evidence="1">
    <location>
        <position position="295"/>
    </location>
    <ligand>
        <name>Mg(2+)</name>
        <dbReference type="ChEBI" id="CHEBI:18420"/>
        <label>1</label>
    </ligand>
</feature>
<feature type="binding site" evidence="1">
    <location>
        <position position="306"/>
    </location>
    <ligand>
        <name>Mg(2+)</name>
        <dbReference type="ChEBI" id="CHEBI:18420"/>
        <label>2</label>
    </ligand>
</feature>
<feature type="binding site" evidence="1">
    <location>
        <position position="308"/>
    </location>
    <ligand>
        <name>Mg(2+)</name>
        <dbReference type="ChEBI" id="CHEBI:18420"/>
        <label>2</label>
    </ligand>
</feature>
<feature type="binding site" evidence="1">
    <location>
        <position position="338"/>
    </location>
    <ligand>
        <name>Mg(2+)</name>
        <dbReference type="ChEBI" id="CHEBI:18420"/>
        <label>1</label>
    </ligand>
</feature>
<keyword id="KW-0119">Carbohydrate metabolism</keyword>
<keyword id="KW-0963">Cytoplasm</keyword>
<keyword id="KW-0413">Isomerase</keyword>
<keyword id="KW-0460">Magnesium</keyword>
<keyword id="KW-0479">Metal-binding</keyword>
<keyword id="KW-0859">Xylose metabolism</keyword>
<organism>
    <name type="scientific">Thermoanaerobacter sp. (strain X514)</name>
    <dbReference type="NCBI Taxonomy" id="399726"/>
    <lineage>
        <taxon>Bacteria</taxon>
        <taxon>Bacillati</taxon>
        <taxon>Bacillota</taxon>
        <taxon>Clostridia</taxon>
        <taxon>Thermoanaerobacterales</taxon>
        <taxon>Thermoanaerobacteraceae</taxon>
        <taxon>Thermoanaerobacter</taxon>
    </lineage>
</organism>
<accession>B0K1L3</accession>
<name>XYLA_THEPX</name>
<proteinExistence type="inferred from homology"/>
<dbReference type="EC" id="5.3.1.5" evidence="1"/>
<dbReference type="EMBL" id="CP000923">
    <property type="protein sequence ID" value="ABY91472.1"/>
    <property type="molecule type" value="Genomic_DNA"/>
</dbReference>
<dbReference type="RefSeq" id="WP_009051955.1">
    <property type="nucleotide sequence ID" value="NC_010320.1"/>
</dbReference>
<dbReference type="SMR" id="B0K1L3"/>
<dbReference type="KEGG" id="tex:Teth514_0153"/>
<dbReference type="HOGENOM" id="CLU_037261_1_0_9"/>
<dbReference type="Proteomes" id="UP000002155">
    <property type="component" value="Chromosome"/>
</dbReference>
<dbReference type="GO" id="GO:0005737">
    <property type="term" value="C:cytoplasm"/>
    <property type="evidence" value="ECO:0007669"/>
    <property type="project" value="UniProtKB-SubCell"/>
</dbReference>
<dbReference type="GO" id="GO:0000287">
    <property type="term" value="F:magnesium ion binding"/>
    <property type="evidence" value="ECO:0007669"/>
    <property type="project" value="UniProtKB-UniRule"/>
</dbReference>
<dbReference type="GO" id="GO:0009045">
    <property type="term" value="F:xylose isomerase activity"/>
    <property type="evidence" value="ECO:0007669"/>
    <property type="project" value="UniProtKB-UniRule"/>
</dbReference>
<dbReference type="GO" id="GO:0042732">
    <property type="term" value="P:D-xylose metabolic process"/>
    <property type="evidence" value="ECO:0007669"/>
    <property type="project" value="UniProtKB-UniRule"/>
</dbReference>
<dbReference type="FunFam" id="3.20.20.150:FF:000002">
    <property type="entry name" value="Xylose isomerase"/>
    <property type="match status" value="1"/>
</dbReference>
<dbReference type="Gene3D" id="3.20.20.150">
    <property type="entry name" value="Divalent-metal-dependent TIM barrel enzymes"/>
    <property type="match status" value="1"/>
</dbReference>
<dbReference type="HAMAP" id="MF_00455">
    <property type="entry name" value="Xylose_isom_A"/>
    <property type="match status" value="1"/>
</dbReference>
<dbReference type="InterPro" id="IPR036237">
    <property type="entry name" value="Xyl_isomerase-like_sf"/>
</dbReference>
<dbReference type="InterPro" id="IPR013022">
    <property type="entry name" value="Xyl_isomerase-like_TIM-brl"/>
</dbReference>
<dbReference type="InterPro" id="IPR013452">
    <property type="entry name" value="Xylose_isom_bac"/>
</dbReference>
<dbReference type="InterPro" id="IPR001998">
    <property type="entry name" value="Xylose_isomerase"/>
</dbReference>
<dbReference type="NCBIfam" id="NF003998">
    <property type="entry name" value="PRK05474.1"/>
    <property type="match status" value="1"/>
</dbReference>
<dbReference type="NCBIfam" id="TIGR02630">
    <property type="entry name" value="xylose_isom_A"/>
    <property type="match status" value="1"/>
</dbReference>
<dbReference type="PANTHER" id="PTHR48408">
    <property type="match status" value="1"/>
</dbReference>
<dbReference type="PANTHER" id="PTHR48408:SF1">
    <property type="entry name" value="XYLOSE ISOMERASE"/>
    <property type="match status" value="1"/>
</dbReference>
<dbReference type="Pfam" id="PF01261">
    <property type="entry name" value="AP_endonuc_2"/>
    <property type="match status" value="1"/>
</dbReference>
<dbReference type="PRINTS" id="PR00688">
    <property type="entry name" value="XYLOSISMRASE"/>
</dbReference>
<dbReference type="SUPFAM" id="SSF51658">
    <property type="entry name" value="Xylose isomerase-like"/>
    <property type="match status" value="1"/>
</dbReference>
<dbReference type="PROSITE" id="PS51415">
    <property type="entry name" value="XYLOSE_ISOMERASE"/>
    <property type="match status" value="1"/>
</dbReference>
<comment type="catalytic activity">
    <reaction evidence="1">
        <text>alpha-D-xylose = alpha-D-xylulofuranose</text>
        <dbReference type="Rhea" id="RHEA:22816"/>
        <dbReference type="ChEBI" id="CHEBI:28518"/>
        <dbReference type="ChEBI" id="CHEBI:188998"/>
        <dbReference type="EC" id="5.3.1.5"/>
    </reaction>
</comment>
<comment type="cofactor">
    <cofactor evidence="1">
        <name>Mg(2+)</name>
        <dbReference type="ChEBI" id="CHEBI:18420"/>
    </cofactor>
    <text evidence="1">Binds 2 magnesium ions per subunit.</text>
</comment>
<comment type="subunit">
    <text evidence="1">Homotetramer.</text>
</comment>
<comment type="subcellular location">
    <subcellularLocation>
        <location evidence="1">Cytoplasm</location>
    </subcellularLocation>
</comment>
<comment type="similarity">
    <text evidence="1">Belongs to the xylose isomerase family.</text>
</comment>
<evidence type="ECO:0000255" key="1">
    <source>
        <dbReference type="HAMAP-Rule" id="MF_00455"/>
    </source>
</evidence>